<gene>
    <name type="ordered locus">ECU08_1790</name>
</gene>
<reference key="1">
    <citation type="journal article" date="2001" name="Nature">
        <title>Genome sequence and gene compaction of the eukaryote parasite Encephalitozoon cuniculi.</title>
        <authorList>
            <person name="Katinka M.D."/>
            <person name="Duprat S."/>
            <person name="Cornillot E."/>
            <person name="Metenier G."/>
            <person name="Thomarat F."/>
            <person name="Prensier G."/>
            <person name="Barbe V."/>
            <person name="Peyretaillade E."/>
            <person name="Brottier P."/>
            <person name="Wincker P."/>
            <person name="Delbac F."/>
            <person name="El Alaoui H."/>
            <person name="Peyret P."/>
            <person name="Saurin W."/>
            <person name="Gouy M."/>
            <person name="Weissenbach J."/>
            <person name="Vivares C.P."/>
        </authorList>
    </citation>
    <scope>NUCLEOTIDE SEQUENCE [LARGE SCALE GENOMIC DNA]</scope>
    <source>
        <strain>GB-M1</strain>
    </source>
</reference>
<reference key="2">
    <citation type="journal article" date="2007" name="BMC Genomics">
        <title>The complement of protein kinases of the microsporidium Encephalitozoon cuniculi in relation to those of Saccharomyces cerevisiae and Schizosaccharomyces pombe.</title>
        <authorList>
            <person name="Miranda-Saavedra D."/>
            <person name="Stark M.J.R."/>
            <person name="Packer J.C."/>
            <person name="Vivares C.P."/>
            <person name="Doerig C."/>
            <person name="Barton G.J."/>
        </authorList>
    </citation>
    <scope>PREDICTION OF FUNCTION</scope>
</reference>
<sequence length="309" mass="35280">MEKYENIKQVGEGAFGQVYKSRRTSDGAVFAIKKMPVDRETGFPFTAIREIKLCKSVINKHIIGLDEIVFEEGFIFVVLEYMPYDLTGLLASGAKLSTDQIRSITSQLIEAVSSMHGMGLVHRDIKPSNILLDCHGMLKLTDFGLTREISGMMTNRVCTLWYRAPELLLGETSYSLKVDAWSVGCIMLEMRLGRPPYRGSDEVSQIKLIFEELGIPQDKYKWSDLLDVDIYSKSRSTEEIIAERYGHLFDEEELKVLSGFLCLTSRKRLSVANSRYFTVISSHKNTYIPLSFEEAHELYTKERKETKKP</sequence>
<comment type="function">
    <text evidence="1">May play a role in the control of the eukaryotic cell cycle.</text>
</comment>
<comment type="catalytic activity">
    <reaction>
        <text>L-seryl-[protein] + ATP = O-phospho-L-seryl-[protein] + ADP + H(+)</text>
        <dbReference type="Rhea" id="RHEA:17989"/>
        <dbReference type="Rhea" id="RHEA-COMP:9863"/>
        <dbReference type="Rhea" id="RHEA-COMP:11604"/>
        <dbReference type="ChEBI" id="CHEBI:15378"/>
        <dbReference type="ChEBI" id="CHEBI:29999"/>
        <dbReference type="ChEBI" id="CHEBI:30616"/>
        <dbReference type="ChEBI" id="CHEBI:83421"/>
        <dbReference type="ChEBI" id="CHEBI:456216"/>
        <dbReference type="EC" id="2.7.11.22"/>
    </reaction>
</comment>
<comment type="catalytic activity">
    <reaction>
        <text>L-threonyl-[protein] + ATP = O-phospho-L-threonyl-[protein] + ADP + H(+)</text>
        <dbReference type="Rhea" id="RHEA:46608"/>
        <dbReference type="Rhea" id="RHEA-COMP:11060"/>
        <dbReference type="Rhea" id="RHEA-COMP:11605"/>
        <dbReference type="ChEBI" id="CHEBI:15378"/>
        <dbReference type="ChEBI" id="CHEBI:30013"/>
        <dbReference type="ChEBI" id="CHEBI:30616"/>
        <dbReference type="ChEBI" id="CHEBI:61977"/>
        <dbReference type="ChEBI" id="CHEBI:456216"/>
        <dbReference type="EC" id="2.7.11.22"/>
    </reaction>
</comment>
<comment type="subcellular location">
    <subcellularLocation>
        <location evidence="4">Nucleus</location>
    </subcellularLocation>
</comment>
<comment type="similarity">
    <text evidence="4">Belongs to the protein kinase superfamily. CMGC Ser/Thr protein kinase family. CDC2/CDKX subfamily.</text>
</comment>
<feature type="chain" id="PRO_0000385511" description="Probable cell division protein kinase ECU11_1290">
    <location>
        <begin position="1"/>
        <end position="309"/>
    </location>
</feature>
<feature type="domain" description="Protein kinase" evidence="2">
    <location>
        <begin position="4"/>
        <end position="288"/>
    </location>
</feature>
<feature type="active site" description="Proton acceptor" evidence="2 3">
    <location>
        <position position="124"/>
    </location>
</feature>
<feature type="binding site" evidence="2">
    <location>
        <begin position="10"/>
        <end position="18"/>
    </location>
    <ligand>
        <name>ATP</name>
        <dbReference type="ChEBI" id="CHEBI:30616"/>
    </ligand>
</feature>
<feature type="binding site" evidence="2">
    <location>
        <position position="33"/>
    </location>
    <ligand>
        <name>ATP</name>
        <dbReference type="ChEBI" id="CHEBI:30616"/>
    </ligand>
</feature>
<keyword id="KW-0067">ATP-binding</keyword>
<keyword id="KW-0131">Cell cycle</keyword>
<keyword id="KW-0132">Cell division</keyword>
<keyword id="KW-0418">Kinase</keyword>
<keyword id="KW-0498">Mitosis</keyword>
<keyword id="KW-0547">Nucleotide-binding</keyword>
<keyword id="KW-0539">Nucleus</keyword>
<keyword id="KW-1185">Reference proteome</keyword>
<keyword id="KW-0723">Serine/threonine-protein kinase</keyword>
<keyword id="KW-0808">Transferase</keyword>
<proteinExistence type="inferred from homology"/>
<name>Y8H9_ENCCU</name>
<accession>Q8SR90</accession>
<evidence type="ECO:0000250" key="1"/>
<evidence type="ECO:0000255" key="2">
    <source>
        <dbReference type="PROSITE-ProRule" id="PRU00159"/>
    </source>
</evidence>
<evidence type="ECO:0000255" key="3">
    <source>
        <dbReference type="PROSITE-ProRule" id="PRU10027"/>
    </source>
</evidence>
<evidence type="ECO:0000305" key="4"/>
<protein>
    <recommendedName>
        <fullName>Probable cell division protein kinase ECU11_1290</fullName>
        <ecNumber>2.7.11.22</ecNumber>
    </recommendedName>
</protein>
<organism>
    <name type="scientific">Encephalitozoon cuniculi (strain GB-M1)</name>
    <name type="common">Microsporidian parasite</name>
    <dbReference type="NCBI Taxonomy" id="284813"/>
    <lineage>
        <taxon>Eukaryota</taxon>
        <taxon>Fungi</taxon>
        <taxon>Fungi incertae sedis</taxon>
        <taxon>Microsporidia</taxon>
        <taxon>Unikaryonidae</taxon>
        <taxon>Encephalitozoon</taxon>
    </lineage>
</organism>
<dbReference type="EC" id="2.7.11.22"/>
<dbReference type="EMBL" id="AL590448">
    <property type="protein sequence ID" value="CAD26483.1"/>
    <property type="molecule type" value="Genomic_DNA"/>
</dbReference>
<dbReference type="RefSeq" id="NP_597307.1">
    <property type="nucleotide sequence ID" value="NM_001041916.1"/>
</dbReference>
<dbReference type="SMR" id="Q8SR90"/>
<dbReference type="FunCoup" id="Q8SR90">
    <property type="interactions" value="50"/>
</dbReference>
<dbReference type="STRING" id="284813.Q8SR90"/>
<dbReference type="GeneID" id="859729"/>
<dbReference type="KEGG" id="ecu:ECU08_1790"/>
<dbReference type="VEuPathDB" id="MicrosporidiaDB:ECU08_1790"/>
<dbReference type="HOGENOM" id="CLU_000288_181_1_1"/>
<dbReference type="InParanoid" id="Q8SR90"/>
<dbReference type="OMA" id="IMDYCTS"/>
<dbReference type="OrthoDB" id="204883at2759"/>
<dbReference type="Proteomes" id="UP000000819">
    <property type="component" value="Chromosome VIII"/>
</dbReference>
<dbReference type="GO" id="GO:0000307">
    <property type="term" value="C:cyclin-dependent protein kinase holoenzyme complex"/>
    <property type="evidence" value="ECO:0007669"/>
    <property type="project" value="TreeGrafter"/>
</dbReference>
<dbReference type="GO" id="GO:0005634">
    <property type="term" value="C:nucleus"/>
    <property type="evidence" value="ECO:0007669"/>
    <property type="project" value="UniProtKB-SubCell"/>
</dbReference>
<dbReference type="GO" id="GO:0005524">
    <property type="term" value="F:ATP binding"/>
    <property type="evidence" value="ECO:0007669"/>
    <property type="project" value="UniProtKB-KW"/>
</dbReference>
<dbReference type="GO" id="GO:0004693">
    <property type="term" value="F:cyclin-dependent protein serine/threonine kinase activity"/>
    <property type="evidence" value="ECO:0007669"/>
    <property type="project" value="UniProtKB-EC"/>
</dbReference>
<dbReference type="GO" id="GO:0106310">
    <property type="term" value="F:protein serine kinase activity"/>
    <property type="evidence" value="ECO:0007669"/>
    <property type="project" value="RHEA"/>
</dbReference>
<dbReference type="GO" id="GO:0008353">
    <property type="term" value="F:RNA polymerase II CTD heptapeptide repeat kinase activity"/>
    <property type="evidence" value="ECO:0007669"/>
    <property type="project" value="TreeGrafter"/>
</dbReference>
<dbReference type="GO" id="GO:0051301">
    <property type="term" value="P:cell division"/>
    <property type="evidence" value="ECO:0007669"/>
    <property type="project" value="UniProtKB-KW"/>
</dbReference>
<dbReference type="GO" id="GO:0032968">
    <property type="term" value="P:positive regulation of transcription elongation by RNA polymerase II"/>
    <property type="evidence" value="ECO:0007669"/>
    <property type="project" value="TreeGrafter"/>
</dbReference>
<dbReference type="FunFam" id="1.10.510.10:FF:000624">
    <property type="entry name" value="Mitogen-activated protein kinase"/>
    <property type="match status" value="1"/>
</dbReference>
<dbReference type="Gene3D" id="3.30.200.20">
    <property type="entry name" value="Phosphorylase Kinase, domain 1"/>
    <property type="match status" value="1"/>
</dbReference>
<dbReference type="Gene3D" id="1.10.510.10">
    <property type="entry name" value="Transferase(Phosphotransferase) domain 1"/>
    <property type="match status" value="1"/>
</dbReference>
<dbReference type="InterPro" id="IPR050108">
    <property type="entry name" value="CDK"/>
</dbReference>
<dbReference type="InterPro" id="IPR011009">
    <property type="entry name" value="Kinase-like_dom_sf"/>
</dbReference>
<dbReference type="InterPro" id="IPR000719">
    <property type="entry name" value="Prot_kinase_dom"/>
</dbReference>
<dbReference type="InterPro" id="IPR017441">
    <property type="entry name" value="Protein_kinase_ATP_BS"/>
</dbReference>
<dbReference type="InterPro" id="IPR008271">
    <property type="entry name" value="Ser/Thr_kinase_AS"/>
</dbReference>
<dbReference type="PANTHER" id="PTHR24056">
    <property type="entry name" value="CELL DIVISION PROTEIN KINASE"/>
    <property type="match status" value="1"/>
</dbReference>
<dbReference type="PANTHER" id="PTHR24056:SF546">
    <property type="entry name" value="CYCLIN-DEPENDENT KINASE 12"/>
    <property type="match status" value="1"/>
</dbReference>
<dbReference type="Pfam" id="PF00069">
    <property type="entry name" value="Pkinase"/>
    <property type="match status" value="1"/>
</dbReference>
<dbReference type="SMART" id="SM00220">
    <property type="entry name" value="S_TKc"/>
    <property type="match status" value="1"/>
</dbReference>
<dbReference type="SUPFAM" id="SSF56112">
    <property type="entry name" value="Protein kinase-like (PK-like)"/>
    <property type="match status" value="1"/>
</dbReference>
<dbReference type="PROSITE" id="PS00107">
    <property type="entry name" value="PROTEIN_KINASE_ATP"/>
    <property type="match status" value="1"/>
</dbReference>
<dbReference type="PROSITE" id="PS50011">
    <property type="entry name" value="PROTEIN_KINASE_DOM"/>
    <property type="match status" value="1"/>
</dbReference>
<dbReference type="PROSITE" id="PS00108">
    <property type="entry name" value="PROTEIN_KINASE_ST"/>
    <property type="match status" value="1"/>
</dbReference>